<feature type="chain" id="PRO_0000252682" description="Astrocytic phosphoprotein PEA-15">
    <location>
        <begin position="1"/>
        <end position="130"/>
    </location>
</feature>
<feature type="domain" description="DED" evidence="3">
    <location>
        <begin position="3"/>
        <end position="81"/>
    </location>
</feature>
<feature type="region of interest" description="Microtubule-binding" evidence="2">
    <location>
        <begin position="98"/>
        <end position="107"/>
    </location>
</feature>
<feature type="region of interest" description="Microtubule-binding" evidence="2">
    <location>
        <begin position="122"/>
        <end position="129"/>
    </location>
</feature>
<feature type="modified residue" description="Phosphoserine" evidence="5">
    <location>
        <position position="61"/>
    </location>
</feature>
<feature type="modified residue" description="Phosphoserine" evidence="5">
    <location>
        <position position="90"/>
    </location>
</feature>
<feature type="modified residue" description="Phosphoserine" evidence="5">
    <location>
        <position position="104"/>
    </location>
</feature>
<feature type="modified residue" description="Phosphoserine" evidence="4 5">
    <location>
        <position position="116"/>
    </location>
</feature>
<organism>
    <name type="scientific">Rattus norvegicus</name>
    <name type="common">Rat</name>
    <dbReference type="NCBI Taxonomy" id="10116"/>
    <lineage>
        <taxon>Eukaryota</taxon>
        <taxon>Metazoa</taxon>
        <taxon>Chordata</taxon>
        <taxon>Craniata</taxon>
        <taxon>Vertebrata</taxon>
        <taxon>Euteleostomi</taxon>
        <taxon>Mammalia</taxon>
        <taxon>Eutheria</taxon>
        <taxon>Euarchontoglires</taxon>
        <taxon>Glires</taxon>
        <taxon>Rodentia</taxon>
        <taxon>Myomorpha</taxon>
        <taxon>Muroidea</taxon>
        <taxon>Muridae</taxon>
        <taxon>Murinae</taxon>
        <taxon>Rattus</taxon>
    </lineage>
</organism>
<evidence type="ECO:0000250" key="1"/>
<evidence type="ECO:0000255" key="2"/>
<evidence type="ECO:0000255" key="3">
    <source>
        <dbReference type="PROSITE-ProRule" id="PRU00065"/>
    </source>
</evidence>
<evidence type="ECO:0007744" key="4">
    <source>
    </source>
</evidence>
<evidence type="ECO:0007744" key="5">
    <source>
    </source>
</evidence>
<accession>Q5U318</accession>
<accession>Q78ZC9</accession>
<comment type="function">
    <text evidence="1">Blocks Ras-mediated inhibition of integrin activation and modulates the ERK MAP kinase cascade. Inhibits RPS6KA3 activities by retaining it in the cytoplasm. Inhibits both TNFRSF6- and TNFRSF1A-mediated CASP8 activity and apoptosis. Regulates glucose transport by controlling both the content of SLC2A1 glucose transporters on the plasma membrane and the insulin-dependent trafficking of SLC2A4 from the cell interior to the surface (By similarity).</text>
</comment>
<comment type="subunit">
    <text evidence="1">Binds RPS6KA3, MAPK3 and MAPK1. Interacts with CASP8 and FADD. Transient interaction with PLD1 and PLD2 (By similarity).</text>
</comment>
<comment type="subcellular location">
    <subcellularLocation>
        <location>Cytoplasm</location>
    </subcellularLocation>
    <text evidence="1">Associated with microtubules.</text>
</comment>
<comment type="PTM">
    <text evidence="1">Phosphorylated by protein kinase C and calcium-calmodulin-dependent protein kinase. These phosphorylation events are modulated by neurotransmitters or hormones (By similarity).</text>
</comment>
<name>PEA15_RAT</name>
<proteinExistence type="evidence at protein level"/>
<sequence>MAEYGTLLQDLTNNITLEDLEQLKSACKEDIPSEKSEEITTGSAWFSFLESHNKLDKDNLSYIEHIFEISRRPDLLTMVVDYRTRVLKISEEDELDTKLTRIPSAKKYKDIIRQPSEEEIIKLAPPPKKA</sequence>
<protein>
    <recommendedName>
        <fullName>Astrocytic phosphoprotein PEA-15</fullName>
    </recommendedName>
    <alternativeName>
        <fullName>15 kDa phosphoprotein enriched in astrocytes</fullName>
    </alternativeName>
</protein>
<reference key="1">
    <citation type="submission" date="1999-07" db="EMBL/GenBank/DDBJ databases">
        <title>High conservation of PEA-15 mRNAs among mammals.</title>
        <authorList>
            <person name="Chneiweiss H.M."/>
            <person name="Fauquet M."/>
        </authorList>
    </citation>
    <scope>NUCLEOTIDE SEQUENCE [MRNA]</scope>
</reference>
<reference key="2">
    <citation type="journal article" date="2004" name="Genome Res.">
        <title>The status, quality, and expansion of the NIH full-length cDNA project: the Mammalian Gene Collection (MGC).</title>
        <authorList>
            <consortium name="The MGC Project Team"/>
        </authorList>
    </citation>
    <scope>NUCLEOTIDE SEQUENCE [LARGE SCALE MRNA]</scope>
    <source>
        <tissue>Heart</tissue>
    </source>
</reference>
<reference key="3">
    <citation type="submission" date="2007-04" db="UniProtKB">
        <authorList>
            <person name="Lubec G."/>
            <person name="Chen W.-Q."/>
        </authorList>
    </citation>
    <scope>PROTEIN SEQUENCE OF 55-83</scope>
    <scope>IDENTIFICATION BY MASS SPECTROMETRY</scope>
    <source>
        <strain>Sprague-Dawley</strain>
        <tissue>Hippocampus</tissue>
    </source>
</reference>
<reference key="4">
    <citation type="journal article" date="2006" name="Proc. Natl. Acad. Sci. U.S.A.">
        <title>Quantitative phosphoproteomics of vasopressin-sensitive renal cells: regulation of aquaporin-2 phosphorylation at two sites.</title>
        <authorList>
            <person name="Hoffert J.D."/>
            <person name="Pisitkun T."/>
            <person name="Wang G."/>
            <person name="Shen R.-F."/>
            <person name="Knepper M.A."/>
        </authorList>
    </citation>
    <scope>PHOSPHORYLATION [LARGE SCALE ANALYSIS] AT SER-116</scope>
    <scope>IDENTIFICATION BY MASS SPECTROMETRY [LARGE SCALE ANALYSIS]</scope>
</reference>
<reference key="5">
    <citation type="journal article" date="2012" name="Nat. Commun.">
        <title>Quantitative maps of protein phosphorylation sites across 14 different rat organs and tissues.</title>
        <authorList>
            <person name="Lundby A."/>
            <person name="Secher A."/>
            <person name="Lage K."/>
            <person name="Nordsborg N.B."/>
            <person name="Dmytriyev A."/>
            <person name="Lundby C."/>
            <person name="Olsen J.V."/>
        </authorList>
    </citation>
    <scope>PHOSPHORYLATION [LARGE SCALE ANALYSIS] AT SER-61; SER-90; SER-104 AND SER-116</scope>
    <scope>IDENTIFICATION BY MASS SPECTROMETRY [LARGE SCALE ANALYSIS]</scope>
</reference>
<dbReference type="EMBL" id="AJ243949">
    <property type="protein sequence ID" value="CAB51573.1"/>
    <property type="molecule type" value="mRNA"/>
</dbReference>
<dbReference type="EMBL" id="BC085766">
    <property type="protein sequence ID" value="AAH85766.1"/>
    <property type="molecule type" value="mRNA"/>
</dbReference>
<dbReference type="RefSeq" id="NP_001013249.1">
    <property type="nucleotide sequence ID" value="NM_001013231.1"/>
</dbReference>
<dbReference type="BMRB" id="Q5U318"/>
<dbReference type="SMR" id="Q5U318"/>
<dbReference type="DIP" id="DIP-57338N"/>
<dbReference type="FunCoup" id="Q5U318">
    <property type="interactions" value="1131"/>
</dbReference>
<dbReference type="IntAct" id="Q5U318">
    <property type="interactions" value="2"/>
</dbReference>
<dbReference type="MINT" id="Q5U318"/>
<dbReference type="STRING" id="10116.ENSRNOP00000064962"/>
<dbReference type="iPTMnet" id="Q5U318"/>
<dbReference type="PhosphoSitePlus" id="Q5U318"/>
<dbReference type="jPOST" id="Q5U318"/>
<dbReference type="PaxDb" id="10116-ENSRNOP00000064962"/>
<dbReference type="Ensembl" id="ENSRNOT00000111137.1">
    <property type="protein sequence ID" value="ENSRNOP00000091255.1"/>
    <property type="gene ID" value="ENSRNOG00000046996.2"/>
</dbReference>
<dbReference type="GeneID" id="364052"/>
<dbReference type="KEGG" id="rno:364052"/>
<dbReference type="AGR" id="RGD:1306055"/>
<dbReference type="CTD" id="8682"/>
<dbReference type="RGD" id="1306055">
    <property type="gene designation" value="Pea15"/>
</dbReference>
<dbReference type="eggNOG" id="KOG3573">
    <property type="taxonomic scope" value="Eukaryota"/>
</dbReference>
<dbReference type="GeneTree" id="ENSGT00390000000230"/>
<dbReference type="HOGENOM" id="CLU_159419_0_0_1"/>
<dbReference type="InParanoid" id="Q5U318"/>
<dbReference type="OrthoDB" id="17079at9989"/>
<dbReference type="PhylomeDB" id="Q5U318"/>
<dbReference type="TreeFam" id="TF332405"/>
<dbReference type="Reactome" id="R-RNO-112409">
    <property type="pathway name" value="RAF-independent MAPK1/3 activation"/>
</dbReference>
<dbReference type="Reactome" id="R-RNO-5673001">
    <property type="pathway name" value="RAF/MAP kinase cascade"/>
</dbReference>
<dbReference type="PRO" id="PR:Q5U318"/>
<dbReference type="Proteomes" id="UP000002494">
    <property type="component" value="Chromosome 13"/>
</dbReference>
<dbReference type="Bgee" id="ENSRNOG00000046996">
    <property type="expression patterns" value="Expressed in cerebellum and 20 other cell types or tissues"/>
</dbReference>
<dbReference type="GO" id="GO:0005737">
    <property type="term" value="C:cytoplasm"/>
    <property type="evidence" value="ECO:0007669"/>
    <property type="project" value="UniProtKB-SubCell"/>
</dbReference>
<dbReference type="GO" id="GO:0006915">
    <property type="term" value="P:apoptotic process"/>
    <property type="evidence" value="ECO:0007669"/>
    <property type="project" value="UniProtKB-KW"/>
</dbReference>
<dbReference type="GO" id="GO:0000165">
    <property type="term" value="P:MAPK cascade"/>
    <property type="evidence" value="ECO:0007669"/>
    <property type="project" value="InterPro"/>
</dbReference>
<dbReference type="GO" id="GO:0046325">
    <property type="term" value="P:negative regulation of D-glucose import"/>
    <property type="evidence" value="ECO:0000266"/>
    <property type="project" value="RGD"/>
</dbReference>
<dbReference type="GO" id="GO:1902042">
    <property type="term" value="P:negative regulation of extrinsic apoptotic signaling pathway via death domain receptors"/>
    <property type="evidence" value="ECO:0000266"/>
    <property type="project" value="RGD"/>
</dbReference>
<dbReference type="GO" id="GO:1902043">
    <property type="term" value="P:positive regulation of extrinsic apoptotic signaling pathway via death domain receptors"/>
    <property type="evidence" value="ECO:0000266"/>
    <property type="project" value="RGD"/>
</dbReference>
<dbReference type="CDD" id="cd08338">
    <property type="entry name" value="DED_PEA15"/>
    <property type="match status" value="1"/>
</dbReference>
<dbReference type="FunFam" id="1.10.533.10:FF:000026">
    <property type="entry name" value="astrocytic phosphoprotein PEA-15 isoform X1"/>
    <property type="match status" value="1"/>
</dbReference>
<dbReference type="Gene3D" id="1.10.533.10">
    <property type="entry name" value="Death Domain, Fas"/>
    <property type="match status" value="1"/>
</dbReference>
<dbReference type="InterPro" id="IPR011029">
    <property type="entry name" value="DEATH-like_dom_sf"/>
</dbReference>
<dbReference type="InterPro" id="IPR001875">
    <property type="entry name" value="DED_dom"/>
</dbReference>
<dbReference type="InterPro" id="IPR029546">
    <property type="entry name" value="PEA15_DED"/>
</dbReference>
<dbReference type="PANTHER" id="PTHR48169:SF1">
    <property type="entry name" value="ASTROCYTIC PHOSPHOPROTEIN PEA-15"/>
    <property type="match status" value="1"/>
</dbReference>
<dbReference type="PANTHER" id="PTHR48169">
    <property type="entry name" value="DED DOMAIN-CONTAINING PROTEIN"/>
    <property type="match status" value="1"/>
</dbReference>
<dbReference type="Pfam" id="PF01335">
    <property type="entry name" value="DED"/>
    <property type="match status" value="1"/>
</dbReference>
<dbReference type="SMART" id="SM00031">
    <property type="entry name" value="DED"/>
    <property type="match status" value="1"/>
</dbReference>
<dbReference type="SUPFAM" id="SSF47986">
    <property type="entry name" value="DEATH domain"/>
    <property type="match status" value="1"/>
</dbReference>
<dbReference type="PROSITE" id="PS50168">
    <property type="entry name" value="DED"/>
    <property type="match status" value="1"/>
</dbReference>
<gene>
    <name type="primary">Pea15</name>
</gene>
<keyword id="KW-0053">Apoptosis</keyword>
<keyword id="KW-0963">Cytoplasm</keyword>
<keyword id="KW-0903">Direct protein sequencing</keyword>
<keyword id="KW-0597">Phosphoprotein</keyword>
<keyword id="KW-1185">Reference proteome</keyword>
<keyword id="KW-0762">Sugar transport</keyword>
<keyword id="KW-0813">Transport</keyword>